<feature type="chain" id="PRO_0000273999" description="Maltose/maltodextrin import ATP-binding protein MalK">
    <location>
        <begin position="1"/>
        <end position="371"/>
    </location>
</feature>
<feature type="domain" description="ABC transporter" evidence="1">
    <location>
        <begin position="4"/>
        <end position="234"/>
    </location>
</feature>
<feature type="binding site" evidence="1">
    <location>
        <begin position="36"/>
        <end position="43"/>
    </location>
    <ligand>
        <name>ATP</name>
        <dbReference type="ChEBI" id="CHEBI:30616"/>
    </ligand>
</feature>
<reference key="1">
    <citation type="journal article" date="2006" name="BMC Genomics">
        <title>Complete genome sequence of Shigella flexneri 5b and comparison with Shigella flexneri 2a.</title>
        <authorList>
            <person name="Nie H."/>
            <person name="Yang F."/>
            <person name="Zhang X."/>
            <person name="Yang J."/>
            <person name="Chen L."/>
            <person name="Wang J."/>
            <person name="Xiong Z."/>
            <person name="Peng J."/>
            <person name="Sun L."/>
            <person name="Dong J."/>
            <person name="Xue Y."/>
            <person name="Xu X."/>
            <person name="Chen S."/>
            <person name="Yao Z."/>
            <person name="Shen Y."/>
            <person name="Jin Q."/>
        </authorList>
    </citation>
    <scope>NUCLEOTIDE SEQUENCE [LARGE SCALE GENOMIC DNA]</scope>
    <source>
        <strain>8401</strain>
    </source>
</reference>
<dbReference type="EC" id="7.5.2.1" evidence="1"/>
<dbReference type="EMBL" id="CP000266">
    <property type="protein sequence ID" value="ABF06164.1"/>
    <property type="molecule type" value="Genomic_DNA"/>
</dbReference>
<dbReference type="RefSeq" id="WP_005106218.1">
    <property type="nucleotide sequence ID" value="NC_008258.1"/>
</dbReference>
<dbReference type="SMR" id="Q0SXQ1"/>
<dbReference type="KEGG" id="sfv:SFV_4179"/>
<dbReference type="HOGENOM" id="CLU_000604_1_1_6"/>
<dbReference type="Proteomes" id="UP000000659">
    <property type="component" value="Chromosome"/>
</dbReference>
<dbReference type="GO" id="GO:0055052">
    <property type="term" value="C:ATP-binding cassette (ABC) transporter complex, substrate-binding subunit-containing"/>
    <property type="evidence" value="ECO:0007669"/>
    <property type="project" value="TreeGrafter"/>
</dbReference>
<dbReference type="GO" id="GO:1990060">
    <property type="term" value="C:maltose transport complex"/>
    <property type="evidence" value="ECO:0007669"/>
    <property type="project" value="TreeGrafter"/>
</dbReference>
<dbReference type="GO" id="GO:0015423">
    <property type="term" value="F:ABC-type maltose transporter activity"/>
    <property type="evidence" value="ECO:0007669"/>
    <property type="project" value="UniProtKB-EC"/>
</dbReference>
<dbReference type="GO" id="GO:0005524">
    <property type="term" value="F:ATP binding"/>
    <property type="evidence" value="ECO:0007669"/>
    <property type="project" value="UniProtKB-KW"/>
</dbReference>
<dbReference type="GO" id="GO:0016887">
    <property type="term" value="F:ATP hydrolysis activity"/>
    <property type="evidence" value="ECO:0007669"/>
    <property type="project" value="InterPro"/>
</dbReference>
<dbReference type="CDD" id="cd03301">
    <property type="entry name" value="ABC_MalK_N"/>
    <property type="match status" value="1"/>
</dbReference>
<dbReference type="FunFam" id="3.40.50.300:FF:000042">
    <property type="entry name" value="Maltose/maltodextrin ABC transporter, ATP-binding protein"/>
    <property type="match status" value="1"/>
</dbReference>
<dbReference type="FunFam" id="2.40.50.100:FF:000014">
    <property type="entry name" value="Maltose/maltodextrin import ATP-binding protein MalK"/>
    <property type="match status" value="1"/>
</dbReference>
<dbReference type="FunFam" id="2.40.50.140:FF:000070">
    <property type="entry name" value="Maltose/maltodextrin import ATP-binding protein MalK"/>
    <property type="match status" value="1"/>
</dbReference>
<dbReference type="Gene3D" id="2.40.50.100">
    <property type="match status" value="1"/>
</dbReference>
<dbReference type="Gene3D" id="2.40.50.140">
    <property type="entry name" value="Nucleic acid-binding proteins"/>
    <property type="match status" value="1"/>
</dbReference>
<dbReference type="Gene3D" id="3.40.50.300">
    <property type="entry name" value="P-loop containing nucleotide triphosphate hydrolases"/>
    <property type="match status" value="1"/>
</dbReference>
<dbReference type="InterPro" id="IPR003593">
    <property type="entry name" value="AAA+_ATPase"/>
</dbReference>
<dbReference type="InterPro" id="IPR003439">
    <property type="entry name" value="ABC_transporter-like_ATP-bd"/>
</dbReference>
<dbReference type="InterPro" id="IPR017871">
    <property type="entry name" value="ABC_transporter-like_CS"/>
</dbReference>
<dbReference type="InterPro" id="IPR015855">
    <property type="entry name" value="ABC_transpr_MalK-like"/>
</dbReference>
<dbReference type="InterPro" id="IPR047641">
    <property type="entry name" value="ABC_transpr_MalK/UgpC-like"/>
</dbReference>
<dbReference type="InterPro" id="IPR008995">
    <property type="entry name" value="Mo/tungstate-bd_C_term_dom"/>
</dbReference>
<dbReference type="InterPro" id="IPR012340">
    <property type="entry name" value="NA-bd_OB-fold"/>
</dbReference>
<dbReference type="InterPro" id="IPR027417">
    <property type="entry name" value="P-loop_NTPase"/>
</dbReference>
<dbReference type="InterPro" id="IPR013611">
    <property type="entry name" value="Transp-assoc_OB_typ2"/>
</dbReference>
<dbReference type="NCBIfam" id="NF008233">
    <property type="entry name" value="PRK11000.1"/>
    <property type="match status" value="1"/>
</dbReference>
<dbReference type="NCBIfam" id="NF008653">
    <property type="entry name" value="PRK11650.1"/>
    <property type="match status" value="1"/>
</dbReference>
<dbReference type="PANTHER" id="PTHR43875">
    <property type="entry name" value="MALTODEXTRIN IMPORT ATP-BINDING PROTEIN MSMX"/>
    <property type="match status" value="1"/>
</dbReference>
<dbReference type="PANTHER" id="PTHR43875:SF3">
    <property type="entry name" value="MALTOSE_MALTODEXTRIN IMPORT ATP-BINDING PROTEIN MALK"/>
    <property type="match status" value="1"/>
</dbReference>
<dbReference type="Pfam" id="PF00005">
    <property type="entry name" value="ABC_tran"/>
    <property type="match status" value="1"/>
</dbReference>
<dbReference type="Pfam" id="PF08402">
    <property type="entry name" value="TOBE_2"/>
    <property type="match status" value="1"/>
</dbReference>
<dbReference type="SMART" id="SM00382">
    <property type="entry name" value="AAA"/>
    <property type="match status" value="1"/>
</dbReference>
<dbReference type="SUPFAM" id="SSF50331">
    <property type="entry name" value="MOP-like"/>
    <property type="match status" value="1"/>
</dbReference>
<dbReference type="SUPFAM" id="SSF52540">
    <property type="entry name" value="P-loop containing nucleoside triphosphate hydrolases"/>
    <property type="match status" value="1"/>
</dbReference>
<dbReference type="PROSITE" id="PS00211">
    <property type="entry name" value="ABC_TRANSPORTER_1"/>
    <property type="match status" value="1"/>
</dbReference>
<dbReference type="PROSITE" id="PS50893">
    <property type="entry name" value="ABC_TRANSPORTER_2"/>
    <property type="match status" value="1"/>
</dbReference>
<dbReference type="PROSITE" id="PS51245">
    <property type="entry name" value="MALK"/>
    <property type="match status" value="1"/>
</dbReference>
<gene>
    <name evidence="1" type="primary">malK</name>
    <name type="ordered locus">SFV_4179</name>
</gene>
<protein>
    <recommendedName>
        <fullName evidence="1">Maltose/maltodextrin import ATP-binding protein MalK</fullName>
        <ecNumber evidence="1">7.5.2.1</ecNumber>
    </recommendedName>
</protein>
<comment type="function">
    <text evidence="1">Part of the ABC transporter complex MalEFGK involved in maltose/maltodextrin import. Responsible for energy coupling to the transport system.</text>
</comment>
<comment type="catalytic activity">
    <reaction evidence="1">
        <text>D-maltose(out) + ATP + H2O = D-maltose(in) + ADP + phosphate + H(+)</text>
        <dbReference type="Rhea" id="RHEA:22132"/>
        <dbReference type="ChEBI" id="CHEBI:15377"/>
        <dbReference type="ChEBI" id="CHEBI:15378"/>
        <dbReference type="ChEBI" id="CHEBI:17306"/>
        <dbReference type="ChEBI" id="CHEBI:30616"/>
        <dbReference type="ChEBI" id="CHEBI:43474"/>
        <dbReference type="ChEBI" id="CHEBI:456216"/>
        <dbReference type="EC" id="7.5.2.1"/>
    </reaction>
</comment>
<comment type="subunit">
    <text evidence="1">The complex is composed of two ATP-binding proteins (MalK), two transmembrane proteins (MalG and MalK) and a solute-binding protein (MalE).</text>
</comment>
<comment type="subcellular location">
    <subcellularLocation>
        <location evidence="1">Cell inner membrane</location>
        <topology evidence="1">Peripheral membrane protein</topology>
    </subcellularLocation>
</comment>
<comment type="similarity">
    <text evidence="1">Belongs to the ABC transporter superfamily. Maltooligosaccharide importer (TC 3.A.1.1.1) family.</text>
</comment>
<accession>Q0SXQ1</accession>
<organism>
    <name type="scientific">Shigella flexneri serotype 5b (strain 8401)</name>
    <dbReference type="NCBI Taxonomy" id="373384"/>
    <lineage>
        <taxon>Bacteria</taxon>
        <taxon>Pseudomonadati</taxon>
        <taxon>Pseudomonadota</taxon>
        <taxon>Gammaproteobacteria</taxon>
        <taxon>Enterobacterales</taxon>
        <taxon>Enterobacteriaceae</taxon>
        <taxon>Shigella</taxon>
    </lineage>
</organism>
<name>MALK_SHIF8</name>
<keyword id="KW-0067">ATP-binding</keyword>
<keyword id="KW-0997">Cell inner membrane</keyword>
<keyword id="KW-1003">Cell membrane</keyword>
<keyword id="KW-0472">Membrane</keyword>
<keyword id="KW-0547">Nucleotide-binding</keyword>
<keyword id="KW-0762">Sugar transport</keyword>
<keyword id="KW-1278">Translocase</keyword>
<keyword id="KW-0813">Transport</keyword>
<sequence>MASVQLQNVTKAWGEVVVSKDINLDIHEGEFVVFVGPSGCGKSTLLRMIAGLETITSGDLFIGEKRMNDTPPAERGVGMVFQSYALYPHLSVAENMSFGLKLAGAKKEVINQRVNQVAEVLQLVHLLDRKPKALSGGQRQRVAIGRTLVAEPSVFLLDEPLSNLDAALRVQMRIEISRLHKRLGRTMIYVTHDQVEAMTLADKIVVLDAGRVAQVGKPLELYHYPADRFVAGFIGSPKMNFLPVKVTATAIDQVQVELPMPNRQQVWLPVESRDVQVGANMSLGIRPEHLLPSDIADVILEGEVQVVEQLGNETQIYIQIPSIRQNLVYRQNDVVLVEEGATFAIGLPPERCHLFREDGTACRRLHKEPGV</sequence>
<proteinExistence type="inferred from homology"/>
<evidence type="ECO:0000255" key="1">
    <source>
        <dbReference type="HAMAP-Rule" id="MF_01709"/>
    </source>
</evidence>